<feature type="chain" id="PRO_0000331158" description="Spermidine export protein MdtI">
    <location>
        <begin position="1"/>
        <end position="109"/>
    </location>
</feature>
<feature type="transmembrane region" description="Helical" evidence="1">
    <location>
        <begin position="6"/>
        <end position="26"/>
    </location>
</feature>
<feature type="transmembrane region" description="Helical" evidence="1">
    <location>
        <begin position="36"/>
        <end position="56"/>
    </location>
</feature>
<feature type="transmembrane region" description="Helical" evidence="1">
    <location>
        <begin position="64"/>
        <end position="84"/>
    </location>
</feature>
<feature type="transmembrane region" description="Helical" evidence="1">
    <location>
        <begin position="88"/>
        <end position="108"/>
    </location>
</feature>
<evidence type="ECO:0000255" key="1">
    <source>
        <dbReference type="HAMAP-Rule" id="MF_01597"/>
    </source>
</evidence>
<organism>
    <name type="scientific">Yersinia pestis bv. Antiqua (strain Antiqua)</name>
    <dbReference type="NCBI Taxonomy" id="360102"/>
    <lineage>
        <taxon>Bacteria</taxon>
        <taxon>Pseudomonadati</taxon>
        <taxon>Pseudomonadota</taxon>
        <taxon>Gammaproteobacteria</taxon>
        <taxon>Enterobacterales</taxon>
        <taxon>Yersiniaceae</taxon>
        <taxon>Yersinia</taxon>
    </lineage>
</organism>
<dbReference type="EMBL" id="CP000308">
    <property type="protein sequence ID" value="ABG13419.1"/>
    <property type="molecule type" value="Genomic_DNA"/>
</dbReference>
<dbReference type="RefSeq" id="WP_002211187.1">
    <property type="nucleotide sequence ID" value="NZ_CP009906.1"/>
</dbReference>
<dbReference type="SMR" id="Q1C803"/>
<dbReference type="GeneID" id="57976592"/>
<dbReference type="KEGG" id="ypa:YPA_1452"/>
<dbReference type="Proteomes" id="UP000001971">
    <property type="component" value="Chromosome"/>
</dbReference>
<dbReference type="GO" id="GO:0005886">
    <property type="term" value="C:plasma membrane"/>
    <property type="evidence" value="ECO:0007669"/>
    <property type="project" value="UniProtKB-SubCell"/>
</dbReference>
<dbReference type="GO" id="GO:0015199">
    <property type="term" value="F:amino-acid betaine transmembrane transporter activity"/>
    <property type="evidence" value="ECO:0007669"/>
    <property type="project" value="TreeGrafter"/>
</dbReference>
<dbReference type="GO" id="GO:0015297">
    <property type="term" value="F:antiporter activity"/>
    <property type="evidence" value="ECO:0007669"/>
    <property type="project" value="TreeGrafter"/>
</dbReference>
<dbReference type="GO" id="GO:0015220">
    <property type="term" value="F:choline transmembrane transporter activity"/>
    <property type="evidence" value="ECO:0007669"/>
    <property type="project" value="TreeGrafter"/>
</dbReference>
<dbReference type="GO" id="GO:0015606">
    <property type="term" value="F:spermidine transmembrane transporter activity"/>
    <property type="evidence" value="ECO:0007669"/>
    <property type="project" value="UniProtKB-UniRule"/>
</dbReference>
<dbReference type="GO" id="GO:0031460">
    <property type="term" value="P:glycine betaine transport"/>
    <property type="evidence" value="ECO:0007669"/>
    <property type="project" value="TreeGrafter"/>
</dbReference>
<dbReference type="FunFam" id="1.10.3730.20:FF:000001">
    <property type="entry name" value="Quaternary ammonium compound resistance transporter SugE"/>
    <property type="match status" value="1"/>
</dbReference>
<dbReference type="Gene3D" id="1.10.3730.20">
    <property type="match status" value="1"/>
</dbReference>
<dbReference type="HAMAP" id="MF_01597">
    <property type="entry name" value="MdtI"/>
    <property type="match status" value="1"/>
</dbReference>
<dbReference type="InterPro" id="IPR000390">
    <property type="entry name" value="Small_drug/metabolite_transptr"/>
</dbReference>
<dbReference type="InterPro" id="IPR045324">
    <property type="entry name" value="Small_multidrug_res"/>
</dbReference>
<dbReference type="InterPro" id="IPR023737">
    <property type="entry name" value="Spermidine_export_MdtI"/>
</dbReference>
<dbReference type="NCBIfam" id="NF007934">
    <property type="entry name" value="PRK10650.1"/>
    <property type="match status" value="1"/>
</dbReference>
<dbReference type="PANTHER" id="PTHR30561">
    <property type="entry name" value="SMR FAMILY PROTON-DEPENDENT DRUG EFFLUX TRANSPORTER SUGE"/>
    <property type="match status" value="1"/>
</dbReference>
<dbReference type="PANTHER" id="PTHR30561:SF6">
    <property type="entry name" value="SPERMIDINE EXPORT PROTEIN MDTI"/>
    <property type="match status" value="1"/>
</dbReference>
<dbReference type="Pfam" id="PF00893">
    <property type="entry name" value="Multi_Drug_Res"/>
    <property type="match status" value="1"/>
</dbReference>
<dbReference type="SUPFAM" id="SSF103481">
    <property type="entry name" value="Multidrug resistance efflux transporter EmrE"/>
    <property type="match status" value="1"/>
</dbReference>
<protein>
    <recommendedName>
        <fullName evidence="1">Spermidine export protein MdtI</fullName>
    </recommendedName>
</protein>
<gene>
    <name evidence="1" type="primary">mdtI</name>
    <name type="ordered locus">YPA_1452</name>
</gene>
<proteinExistence type="inferred from homology"/>
<accession>Q1C803</accession>
<keyword id="KW-0997">Cell inner membrane</keyword>
<keyword id="KW-1003">Cell membrane</keyword>
<keyword id="KW-0472">Membrane</keyword>
<keyword id="KW-0812">Transmembrane</keyword>
<keyword id="KW-1133">Transmembrane helix</keyword>
<keyword id="KW-0813">Transport</keyword>
<sequence>MQQLEFYPIAFLILAVMLEIVANILLKMSDGFRRKWLGILSLLSVLGAFSALAQAVKGIELSVAYALWGGFGIAATVAAGWILFNQRLNYKGWIGLILLLAGMVMIKLS</sequence>
<comment type="function">
    <text evidence="1">Catalyzes the excretion of spermidine.</text>
</comment>
<comment type="subunit">
    <text evidence="1">Forms a complex with MdtJ.</text>
</comment>
<comment type="subcellular location">
    <subcellularLocation>
        <location evidence="1">Cell inner membrane</location>
        <topology evidence="1">Multi-pass membrane protein</topology>
    </subcellularLocation>
</comment>
<comment type="similarity">
    <text evidence="1">Belongs to the drug/metabolite transporter (DMT) superfamily. Small multidrug resistance (SMR) (TC 2.A.7.1) family. MdtI subfamily.</text>
</comment>
<reference key="1">
    <citation type="journal article" date="2006" name="J. Bacteriol.">
        <title>Complete genome sequence of Yersinia pestis strains Antiqua and Nepal516: evidence of gene reduction in an emerging pathogen.</title>
        <authorList>
            <person name="Chain P.S.G."/>
            <person name="Hu P."/>
            <person name="Malfatti S.A."/>
            <person name="Radnedge L."/>
            <person name="Larimer F."/>
            <person name="Vergez L.M."/>
            <person name="Worsham P."/>
            <person name="Chu M.C."/>
            <person name="Andersen G.L."/>
        </authorList>
    </citation>
    <scope>NUCLEOTIDE SEQUENCE [LARGE SCALE GENOMIC DNA]</scope>
    <source>
        <strain>Antiqua</strain>
    </source>
</reference>
<name>MDTI_YERPA</name>